<sequence length="143" mass="16117">MEYNNMMELKFLSKSQNESFARTVVAAFAAQLDPTIEEIADIKTAVSEAVTNCIIHAYENKIGIITIRAFILDNKITIEVIDEGKGIEDVEKAMQPLFTTRLEEERAGMGFTVMQTFMDELEVESTPGKGTLVRMTKYIGRNR</sequence>
<proteinExistence type="inferred from homology"/>
<reference key="1">
    <citation type="journal article" date="2002" name="Genome Res.">
        <title>A complete sequence of the T. tengcongensis genome.</title>
        <authorList>
            <person name="Bao Q."/>
            <person name="Tian Y."/>
            <person name="Li W."/>
            <person name="Xu Z."/>
            <person name="Xuan Z."/>
            <person name="Hu S."/>
            <person name="Dong W."/>
            <person name="Yang J."/>
            <person name="Chen Y."/>
            <person name="Xue Y."/>
            <person name="Xu Y."/>
            <person name="Lai X."/>
            <person name="Huang L."/>
            <person name="Dong X."/>
            <person name="Ma Y."/>
            <person name="Ling L."/>
            <person name="Tan H."/>
            <person name="Chen R."/>
            <person name="Wang J."/>
            <person name="Yu J."/>
            <person name="Yang H."/>
        </authorList>
    </citation>
    <scope>NUCLEOTIDE SEQUENCE [LARGE SCALE GENOMIC DNA]</scope>
    <source>
        <strain>DSM 15242 / JCM 11007 / NBRC 100824 / MB4</strain>
    </source>
</reference>
<name>SP2AB_CALS4</name>
<comment type="function">
    <text evidence="1">Binds to sigma F and blocks its ability to form an RNA polymerase holoenzyme (E-sigma F). Phosphorylates SpoIIAA on a serine residue. This phosphorylation may enable SpoIIAA to act as an anti-anti-sigma factor that counteracts SpoIIAB and thus releases sigma F from inhibition.</text>
</comment>
<comment type="catalytic activity">
    <reaction evidence="1">
        <text>L-seryl-[protein] + ATP = O-phospho-L-seryl-[protein] + ADP + H(+)</text>
        <dbReference type="Rhea" id="RHEA:17989"/>
        <dbReference type="Rhea" id="RHEA-COMP:9863"/>
        <dbReference type="Rhea" id="RHEA-COMP:11604"/>
        <dbReference type="ChEBI" id="CHEBI:15378"/>
        <dbReference type="ChEBI" id="CHEBI:29999"/>
        <dbReference type="ChEBI" id="CHEBI:30616"/>
        <dbReference type="ChEBI" id="CHEBI:83421"/>
        <dbReference type="ChEBI" id="CHEBI:456216"/>
        <dbReference type="EC" id="2.7.11.1"/>
    </reaction>
</comment>
<comment type="catalytic activity">
    <reaction evidence="1">
        <text>L-threonyl-[protein] + ATP = O-phospho-L-threonyl-[protein] + ADP + H(+)</text>
        <dbReference type="Rhea" id="RHEA:46608"/>
        <dbReference type="Rhea" id="RHEA-COMP:11060"/>
        <dbReference type="Rhea" id="RHEA-COMP:11605"/>
        <dbReference type="ChEBI" id="CHEBI:15378"/>
        <dbReference type="ChEBI" id="CHEBI:30013"/>
        <dbReference type="ChEBI" id="CHEBI:30616"/>
        <dbReference type="ChEBI" id="CHEBI:61977"/>
        <dbReference type="ChEBI" id="CHEBI:456216"/>
        <dbReference type="EC" id="2.7.11.1"/>
    </reaction>
</comment>
<comment type="similarity">
    <text evidence="1">Belongs to the anti-sigma-factor family.</text>
</comment>
<gene>
    <name evidence="1" type="primary">spoIIAB</name>
    <name type="ordered locus">TTE1316</name>
</gene>
<evidence type="ECO:0000255" key="1">
    <source>
        <dbReference type="HAMAP-Rule" id="MF_00637"/>
    </source>
</evidence>
<keyword id="KW-0067">ATP-binding</keyword>
<keyword id="KW-0418">Kinase</keyword>
<keyword id="KW-0547">Nucleotide-binding</keyword>
<keyword id="KW-1185">Reference proteome</keyword>
<keyword id="KW-0723">Serine/threonine-protein kinase</keyword>
<keyword id="KW-0749">Sporulation</keyword>
<keyword id="KW-0808">Transferase</keyword>
<dbReference type="EC" id="2.7.11.1" evidence="1"/>
<dbReference type="EMBL" id="AE008691">
    <property type="protein sequence ID" value="AAM24540.1"/>
    <property type="molecule type" value="Genomic_DNA"/>
</dbReference>
<dbReference type="RefSeq" id="WP_011025623.1">
    <property type="nucleotide sequence ID" value="NC_003869.1"/>
</dbReference>
<dbReference type="SMR" id="Q8RAA8"/>
<dbReference type="STRING" id="273068.TTE1316"/>
<dbReference type="KEGG" id="tte:TTE1316"/>
<dbReference type="eggNOG" id="COG2172">
    <property type="taxonomic scope" value="Bacteria"/>
</dbReference>
<dbReference type="HOGENOM" id="CLU_090336_11_0_9"/>
<dbReference type="OrthoDB" id="9768808at2"/>
<dbReference type="Proteomes" id="UP000000555">
    <property type="component" value="Chromosome"/>
</dbReference>
<dbReference type="GO" id="GO:0005524">
    <property type="term" value="F:ATP binding"/>
    <property type="evidence" value="ECO:0007669"/>
    <property type="project" value="UniProtKB-KW"/>
</dbReference>
<dbReference type="GO" id="GO:0106310">
    <property type="term" value="F:protein serine kinase activity"/>
    <property type="evidence" value="ECO:0007669"/>
    <property type="project" value="RHEA"/>
</dbReference>
<dbReference type="GO" id="GO:0004674">
    <property type="term" value="F:protein serine/threonine kinase activity"/>
    <property type="evidence" value="ECO:0007669"/>
    <property type="project" value="UniProtKB-KW"/>
</dbReference>
<dbReference type="GO" id="GO:0016989">
    <property type="term" value="F:sigma factor antagonist activity"/>
    <property type="evidence" value="ECO:0007669"/>
    <property type="project" value="InterPro"/>
</dbReference>
<dbReference type="GO" id="GO:0030436">
    <property type="term" value="P:asexual sporulation"/>
    <property type="evidence" value="ECO:0007669"/>
    <property type="project" value="UniProtKB-UniRule"/>
</dbReference>
<dbReference type="GO" id="GO:0042174">
    <property type="term" value="P:negative regulation of sporulation resulting in formation of a cellular spore"/>
    <property type="evidence" value="ECO:0007669"/>
    <property type="project" value="InterPro"/>
</dbReference>
<dbReference type="GO" id="GO:0030435">
    <property type="term" value="P:sporulation resulting in formation of a cellular spore"/>
    <property type="evidence" value="ECO:0007669"/>
    <property type="project" value="UniProtKB-KW"/>
</dbReference>
<dbReference type="Gene3D" id="3.30.565.10">
    <property type="entry name" value="Histidine kinase-like ATPase, C-terminal domain"/>
    <property type="match status" value="1"/>
</dbReference>
<dbReference type="HAMAP" id="MF_00637">
    <property type="entry name" value="Anti_sigma_F"/>
    <property type="match status" value="1"/>
</dbReference>
<dbReference type="InterPro" id="IPR050267">
    <property type="entry name" value="Anti-sigma-factor_SerPK"/>
</dbReference>
<dbReference type="InterPro" id="IPR010194">
    <property type="entry name" value="Anti-sigma_F"/>
</dbReference>
<dbReference type="InterPro" id="IPR036890">
    <property type="entry name" value="HATPase_C_sf"/>
</dbReference>
<dbReference type="NCBIfam" id="TIGR01925">
    <property type="entry name" value="spIIAB"/>
    <property type="match status" value="1"/>
</dbReference>
<dbReference type="PANTHER" id="PTHR35526:SF3">
    <property type="entry name" value="ANTI-SIGMA-F FACTOR RSBW"/>
    <property type="match status" value="1"/>
</dbReference>
<dbReference type="PANTHER" id="PTHR35526">
    <property type="entry name" value="ANTI-SIGMA-F FACTOR RSBW-RELATED"/>
    <property type="match status" value="1"/>
</dbReference>
<dbReference type="Pfam" id="PF13581">
    <property type="entry name" value="HATPase_c_2"/>
    <property type="match status" value="1"/>
</dbReference>
<dbReference type="SMART" id="SM00387">
    <property type="entry name" value="HATPase_c"/>
    <property type="match status" value="1"/>
</dbReference>
<dbReference type="SUPFAM" id="SSF55874">
    <property type="entry name" value="ATPase domain of HSP90 chaperone/DNA topoisomerase II/histidine kinase"/>
    <property type="match status" value="1"/>
</dbReference>
<feature type="chain" id="PRO_0000203569" description="Anti-sigma F factor">
    <location>
        <begin position="1"/>
        <end position="143"/>
    </location>
</feature>
<protein>
    <recommendedName>
        <fullName evidence="1">Anti-sigma F factor</fullName>
        <ecNumber evidence="1">2.7.11.1</ecNumber>
    </recommendedName>
    <alternativeName>
        <fullName evidence="1">Stage II sporulation protein AB</fullName>
    </alternativeName>
</protein>
<accession>Q8RAA8</accession>
<organism>
    <name type="scientific">Caldanaerobacter subterraneus subsp. tengcongensis (strain DSM 15242 / JCM 11007 / NBRC 100824 / MB4)</name>
    <name type="common">Thermoanaerobacter tengcongensis</name>
    <dbReference type="NCBI Taxonomy" id="273068"/>
    <lineage>
        <taxon>Bacteria</taxon>
        <taxon>Bacillati</taxon>
        <taxon>Bacillota</taxon>
        <taxon>Clostridia</taxon>
        <taxon>Thermoanaerobacterales</taxon>
        <taxon>Thermoanaerobacteraceae</taxon>
        <taxon>Caldanaerobacter</taxon>
    </lineage>
</organism>